<protein>
    <recommendedName>
        <fullName>Uncharacterized protein SP_1052</fullName>
    </recommendedName>
</protein>
<evidence type="ECO:0000269" key="1">
    <source>
    </source>
</evidence>
<sequence>MRGFNNKIKSVYQELTNSKEKFGSFHKTLIHLHTPVSYDYKLFSNWTATKYRKITEDELYDIFFENKKIKVDKTIFFSNFDKVVFSSSKEYISFLMLAEAIIKNGIEIVVVTDHNTTKGIKKLQMAVSIIMKNYPIYDIHPHILHGVEISAADKLHIVCIYDYEQESWVNQWLSENIISEKDGSYQHSLTIMKDFNNQKIVNYIAHFNSYDILKKGSHLSGAYKRKIFSKENTRFWSLILTRKNLRNNLIFSIKKLVY</sequence>
<gene>
    <name type="ordered locus">SP_1052</name>
</gene>
<organism>
    <name type="scientific">Streptococcus pneumoniae serotype 4 (strain ATCC BAA-334 / TIGR4)</name>
    <dbReference type="NCBI Taxonomy" id="170187"/>
    <lineage>
        <taxon>Bacteria</taxon>
        <taxon>Bacillati</taxon>
        <taxon>Bacillota</taxon>
        <taxon>Bacilli</taxon>
        <taxon>Lactobacillales</taxon>
        <taxon>Streptococcaceae</taxon>
        <taxon>Streptococcus</taxon>
    </lineage>
</organism>
<keyword id="KW-1185">Reference proteome</keyword>
<accession>Q97QZ0</accession>
<proteinExistence type="evidence at transcript level"/>
<dbReference type="EMBL" id="AE005672">
    <property type="protein sequence ID" value="AAK75166.1"/>
    <property type="molecule type" value="Genomic_DNA"/>
</dbReference>
<dbReference type="PIR" id="A97991">
    <property type="entry name" value="A97991"/>
</dbReference>
<dbReference type="PIR" id="E95121">
    <property type="entry name" value="E95121"/>
</dbReference>
<dbReference type="RefSeq" id="WP_001821017.1">
    <property type="nucleotide sequence ID" value="NZ_CP155539.1"/>
</dbReference>
<dbReference type="PaxDb" id="170187-SP_1052"/>
<dbReference type="EnsemblBacteria" id="AAK75166">
    <property type="protein sequence ID" value="AAK75166"/>
    <property type="gene ID" value="SP_1052"/>
</dbReference>
<dbReference type="KEGG" id="spn:SP_1052"/>
<dbReference type="eggNOG" id="COG0613">
    <property type="taxonomic scope" value="Bacteria"/>
</dbReference>
<dbReference type="Proteomes" id="UP000000585">
    <property type="component" value="Chromosome"/>
</dbReference>
<dbReference type="Gene3D" id="3.20.20.140">
    <property type="entry name" value="Metal-dependent hydrolases"/>
    <property type="match status" value="1"/>
</dbReference>
<dbReference type="InterPro" id="IPR016195">
    <property type="entry name" value="Pol/histidinol_Pase-like"/>
</dbReference>
<dbReference type="SUPFAM" id="SSF89550">
    <property type="entry name" value="PHP domain-like"/>
    <property type="match status" value="1"/>
</dbReference>
<comment type="induction">
    <text>In S.pneumoniae strain 0100993 is found in the pezT/SP_1052/SP_1053 operon.</text>
</comment>
<comment type="disruption phenotype">
    <text evidence="1">Strains with a pezT/SP_1052/SP_1053 disruption have partially attenuated virulence, they take longer to develop a terminal infection in mice, although they grow normally in liquid culture. A double SP_1052/SP_1053 disruption grows almost as well as wild-type, showing the effect is mostly due to disruption of pezT.</text>
</comment>
<feature type="chain" id="PRO_0000410968" description="Uncharacterized protein SP_1052">
    <location>
        <begin position="1"/>
        <end position="258"/>
    </location>
</feature>
<name>Y1052_STRPN</name>
<reference key="1">
    <citation type="journal article" date="2001" name="Science">
        <title>Complete genome sequence of a virulent isolate of Streptococcus pneumoniae.</title>
        <authorList>
            <person name="Tettelin H."/>
            <person name="Nelson K.E."/>
            <person name="Paulsen I.T."/>
            <person name="Eisen J.A."/>
            <person name="Read T.D."/>
            <person name="Peterson S.N."/>
            <person name="Heidelberg J.F."/>
            <person name="DeBoy R.T."/>
            <person name="Haft D.H."/>
            <person name="Dodson R.J."/>
            <person name="Durkin A.S."/>
            <person name="Gwinn M.L."/>
            <person name="Kolonay J.F."/>
            <person name="Nelson W.C."/>
            <person name="Peterson J.D."/>
            <person name="Umayam L.A."/>
            <person name="White O."/>
            <person name="Salzberg S.L."/>
            <person name="Lewis M.R."/>
            <person name="Radune D."/>
            <person name="Holtzapple E.K."/>
            <person name="Khouri H.M."/>
            <person name="Wolf A.M."/>
            <person name="Utterback T.R."/>
            <person name="Hansen C.L."/>
            <person name="McDonald L.A."/>
            <person name="Feldblyum T.V."/>
            <person name="Angiuoli S.V."/>
            <person name="Dickinson T."/>
            <person name="Hickey E.K."/>
            <person name="Holt I.E."/>
            <person name="Loftus B.J."/>
            <person name="Yang F."/>
            <person name="Smith H.O."/>
            <person name="Venter J.C."/>
            <person name="Dougherty B.A."/>
            <person name="Morrison D.A."/>
            <person name="Hollingshead S.K."/>
            <person name="Fraser C.M."/>
        </authorList>
    </citation>
    <scope>NUCLEOTIDE SEQUENCE [LARGE SCALE GENOMIC DNA]</scope>
    <source>
        <strain>ATCC BAA-334 / TIGR4</strain>
    </source>
</reference>
<reference key="2">
    <citation type="journal article" date="2004" name="Infect. Immun.">
        <title>A locus contained within a variable region of pneumococcal pathogenicity island 1 contributes to virulence in mice.</title>
        <authorList>
            <person name="Brown J.S."/>
            <person name="Gilliland S.M."/>
            <person name="Spratt B.G."/>
            <person name="Holden D.W."/>
        </authorList>
    </citation>
    <scope>DISRUPTION PHENOTYPE</scope>
    <scope>OPERON STRUCTURE</scope>
    <source>
        <strain>0100993 / NCIMB 40794 / Serotype 3</strain>
    </source>
</reference>